<dbReference type="EC" id="6.3.2.-" evidence="4"/>
<dbReference type="EMBL" id="DS027698">
    <property type="protein sequence ID" value="EAW16180.1"/>
    <property type="molecule type" value="Genomic_DNA"/>
</dbReference>
<dbReference type="RefSeq" id="XP_001258077.1">
    <property type="nucleotide sequence ID" value="XM_001258076.1"/>
</dbReference>
<dbReference type="SMR" id="A1DN09"/>
<dbReference type="STRING" id="331117.A1DN09"/>
<dbReference type="EnsemblFungi" id="EAW16180">
    <property type="protein sequence ID" value="EAW16180"/>
    <property type="gene ID" value="NFIA_055290"/>
</dbReference>
<dbReference type="GeneID" id="4584592"/>
<dbReference type="KEGG" id="nfi:NFIA_055290"/>
<dbReference type="VEuPathDB" id="FungiDB:NFIA_055290"/>
<dbReference type="eggNOG" id="KOG1178">
    <property type="taxonomic scope" value="Eukaryota"/>
</dbReference>
<dbReference type="HOGENOM" id="CLU_000022_60_4_1"/>
<dbReference type="OMA" id="RIAMEGH"/>
<dbReference type="OrthoDB" id="416786at2759"/>
<dbReference type="BioCyc" id="MetaCyc:MONOMER-18800"/>
<dbReference type="Proteomes" id="UP000006702">
    <property type="component" value="Unassembled WGS sequence"/>
</dbReference>
<dbReference type="GO" id="GO:0005737">
    <property type="term" value="C:cytoplasm"/>
    <property type="evidence" value="ECO:0007669"/>
    <property type="project" value="TreeGrafter"/>
</dbReference>
<dbReference type="GO" id="GO:0016874">
    <property type="term" value="F:ligase activity"/>
    <property type="evidence" value="ECO:0007669"/>
    <property type="project" value="UniProtKB-KW"/>
</dbReference>
<dbReference type="GO" id="GO:0031177">
    <property type="term" value="F:phosphopantetheine binding"/>
    <property type="evidence" value="ECO:0007669"/>
    <property type="project" value="InterPro"/>
</dbReference>
<dbReference type="GO" id="GO:0009820">
    <property type="term" value="P:alkaloid metabolic process"/>
    <property type="evidence" value="ECO:0007669"/>
    <property type="project" value="UniProtKB-KW"/>
</dbReference>
<dbReference type="GO" id="GO:0043041">
    <property type="term" value="P:amino acid activation for nonribosomal peptide biosynthetic process"/>
    <property type="evidence" value="ECO:0007669"/>
    <property type="project" value="TreeGrafter"/>
</dbReference>
<dbReference type="GO" id="GO:0044550">
    <property type="term" value="P:secondary metabolite biosynthetic process"/>
    <property type="evidence" value="ECO:0007669"/>
    <property type="project" value="TreeGrafter"/>
</dbReference>
<dbReference type="CDD" id="cd05918">
    <property type="entry name" value="A_NRPS_SidN3_like"/>
    <property type="match status" value="2"/>
</dbReference>
<dbReference type="CDD" id="cd19534">
    <property type="entry name" value="E_NRPS"/>
    <property type="match status" value="1"/>
</dbReference>
<dbReference type="CDD" id="cd19545">
    <property type="entry name" value="FUM14_C_NRPS-like"/>
    <property type="match status" value="1"/>
</dbReference>
<dbReference type="FunFam" id="3.30.559.10:FF:000016">
    <property type="entry name" value="Nonribosomal peptide synthase Pes1"/>
    <property type="match status" value="1"/>
</dbReference>
<dbReference type="FunFam" id="3.30.559.30:FF:000002">
    <property type="entry name" value="Nonribosomal peptide synthase Pes1"/>
    <property type="match status" value="1"/>
</dbReference>
<dbReference type="FunFam" id="3.30.300.30:FF:000015">
    <property type="entry name" value="Nonribosomal peptide synthase SidD"/>
    <property type="match status" value="2"/>
</dbReference>
<dbReference type="FunFam" id="1.10.1200.10:FF:000005">
    <property type="entry name" value="Nonribosomal peptide synthetase 1"/>
    <property type="match status" value="1"/>
</dbReference>
<dbReference type="FunFam" id="3.40.50.12780:FF:000014">
    <property type="entry name" value="Nonribosomal peptide synthetase 1"/>
    <property type="match status" value="1"/>
</dbReference>
<dbReference type="Gene3D" id="3.30.300.30">
    <property type="match status" value="2"/>
</dbReference>
<dbReference type="Gene3D" id="1.10.1200.10">
    <property type="entry name" value="ACP-like"/>
    <property type="match status" value="2"/>
</dbReference>
<dbReference type="Gene3D" id="3.30.559.10">
    <property type="entry name" value="Chloramphenicol acetyltransferase-like domain"/>
    <property type="match status" value="2"/>
</dbReference>
<dbReference type="Gene3D" id="3.40.50.12780">
    <property type="entry name" value="N-terminal domain of ligase-like"/>
    <property type="match status" value="2"/>
</dbReference>
<dbReference type="Gene3D" id="3.30.559.30">
    <property type="entry name" value="Nonribosomal peptide synthetase, condensation domain"/>
    <property type="match status" value="2"/>
</dbReference>
<dbReference type="InterPro" id="IPR010071">
    <property type="entry name" value="AA_adenyl_dom"/>
</dbReference>
<dbReference type="InterPro" id="IPR036736">
    <property type="entry name" value="ACP-like_sf"/>
</dbReference>
<dbReference type="InterPro" id="IPR025110">
    <property type="entry name" value="AMP-bd_C"/>
</dbReference>
<dbReference type="InterPro" id="IPR045851">
    <property type="entry name" value="AMP-bd_C_sf"/>
</dbReference>
<dbReference type="InterPro" id="IPR020845">
    <property type="entry name" value="AMP-binding_CS"/>
</dbReference>
<dbReference type="InterPro" id="IPR000873">
    <property type="entry name" value="AMP-dep_synth/lig_dom"/>
</dbReference>
<dbReference type="InterPro" id="IPR042099">
    <property type="entry name" value="ANL_N_sf"/>
</dbReference>
<dbReference type="InterPro" id="IPR023213">
    <property type="entry name" value="CAT-like_dom_sf"/>
</dbReference>
<dbReference type="InterPro" id="IPR001242">
    <property type="entry name" value="Condensatn"/>
</dbReference>
<dbReference type="InterPro" id="IPR020806">
    <property type="entry name" value="PKS_PP-bd"/>
</dbReference>
<dbReference type="InterPro" id="IPR009081">
    <property type="entry name" value="PP-bd_ACP"/>
</dbReference>
<dbReference type="InterPro" id="IPR006162">
    <property type="entry name" value="Ppantetheine_attach_site"/>
</dbReference>
<dbReference type="NCBIfam" id="TIGR01733">
    <property type="entry name" value="AA-adenyl-dom"/>
    <property type="match status" value="2"/>
</dbReference>
<dbReference type="PANTHER" id="PTHR45527:SF1">
    <property type="entry name" value="FATTY ACID SYNTHASE"/>
    <property type="match status" value="1"/>
</dbReference>
<dbReference type="PANTHER" id="PTHR45527">
    <property type="entry name" value="NONRIBOSOMAL PEPTIDE SYNTHETASE"/>
    <property type="match status" value="1"/>
</dbReference>
<dbReference type="Pfam" id="PF00501">
    <property type="entry name" value="AMP-binding"/>
    <property type="match status" value="2"/>
</dbReference>
<dbReference type="Pfam" id="PF13193">
    <property type="entry name" value="AMP-binding_C"/>
    <property type="match status" value="1"/>
</dbReference>
<dbReference type="Pfam" id="PF00668">
    <property type="entry name" value="Condensation"/>
    <property type="match status" value="2"/>
</dbReference>
<dbReference type="Pfam" id="PF00550">
    <property type="entry name" value="PP-binding"/>
    <property type="match status" value="2"/>
</dbReference>
<dbReference type="SMART" id="SM00823">
    <property type="entry name" value="PKS_PP"/>
    <property type="match status" value="2"/>
</dbReference>
<dbReference type="SUPFAM" id="SSF56801">
    <property type="entry name" value="Acetyl-CoA synthetase-like"/>
    <property type="match status" value="2"/>
</dbReference>
<dbReference type="SUPFAM" id="SSF47336">
    <property type="entry name" value="ACP-like"/>
    <property type="match status" value="2"/>
</dbReference>
<dbReference type="SUPFAM" id="SSF52777">
    <property type="entry name" value="CoA-dependent acyltransferases"/>
    <property type="match status" value="4"/>
</dbReference>
<dbReference type="PROSITE" id="PS00455">
    <property type="entry name" value="AMP_BINDING"/>
    <property type="match status" value="1"/>
</dbReference>
<dbReference type="PROSITE" id="PS50075">
    <property type="entry name" value="CARRIER"/>
    <property type="match status" value="2"/>
</dbReference>
<dbReference type="PROSITE" id="PS00012">
    <property type="entry name" value="PHOSPHOPANTETHEINE"/>
    <property type="match status" value="1"/>
</dbReference>
<organism>
    <name type="scientific">Neosartorya fischeri (strain ATCC 1020 / DSM 3700 / CBS 544.65 / FGSC A1164 / JCM 1740 / NRRL 181 / WB 181)</name>
    <name type="common">Aspergillus fischerianus</name>
    <dbReference type="NCBI Taxonomy" id="331117"/>
    <lineage>
        <taxon>Eukaryota</taxon>
        <taxon>Fungi</taxon>
        <taxon>Dikarya</taxon>
        <taxon>Ascomycota</taxon>
        <taxon>Pezizomycotina</taxon>
        <taxon>Eurotiomycetes</taxon>
        <taxon>Eurotiomycetidae</taxon>
        <taxon>Eurotiales</taxon>
        <taxon>Aspergillaceae</taxon>
        <taxon>Aspergillus</taxon>
        <taxon>Aspergillus subgen. Fumigati</taxon>
    </lineage>
</organism>
<protein>
    <recommendedName>
        <fullName evidence="5">Nonribosomal peptide synthetase anaPS</fullName>
        <ecNumber evidence="4">6.3.2.-</ecNumber>
    </recommendedName>
    <alternativeName>
        <fullName evidence="5">Acetylaszonalenin synthesis protein anaPS</fullName>
    </alternativeName>
</protein>
<accession>A1DN09</accession>
<reference key="1">
    <citation type="journal article" date="2008" name="PLoS Genet.">
        <title>Genomic islands in the pathogenic filamentous fungus Aspergillus fumigatus.</title>
        <authorList>
            <person name="Fedorova N.D."/>
            <person name="Khaldi N."/>
            <person name="Joardar V.S."/>
            <person name="Maiti R."/>
            <person name="Amedeo P."/>
            <person name="Anderson M.J."/>
            <person name="Crabtree J."/>
            <person name="Silva J.C."/>
            <person name="Badger J.H."/>
            <person name="Albarraq A."/>
            <person name="Angiuoli S."/>
            <person name="Bussey H."/>
            <person name="Bowyer P."/>
            <person name="Cotty P.J."/>
            <person name="Dyer P.S."/>
            <person name="Egan A."/>
            <person name="Galens K."/>
            <person name="Fraser-Liggett C.M."/>
            <person name="Haas B.J."/>
            <person name="Inman J.M."/>
            <person name="Kent R."/>
            <person name="Lemieux S."/>
            <person name="Malavazi I."/>
            <person name="Orvis J."/>
            <person name="Roemer T."/>
            <person name="Ronning C.M."/>
            <person name="Sundaram J.P."/>
            <person name="Sutton G."/>
            <person name="Turner G."/>
            <person name="Venter J.C."/>
            <person name="White O.R."/>
            <person name="Whitty B.R."/>
            <person name="Youngman P."/>
            <person name="Wolfe K.H."/>
            <person name="Goldman G.H."/>
            <person name="Wortman J.R."/>
            <person name="Jiang B."/>
            <person name="Denning D.W."/>
            <person name="Nierman W.C."/>
        </authorList>
    </citation>
    <scope>NUCLEOTIDE SEQUENCE [LARGE SCALE GENOMIC DNA]</scope>
    <source>
        <strain>ATCC 1020 / DSM 3700 / CBS 544.65 / FGSC A1164 / JCM 1740 / NRRL 181 / WB 181</strain>
    </source>
</reference>
<reference key="2">
    <citation type="journal article" date="2009" name="J. Biol. Chem.">
        <title>Acetylaszonalenin biosynthesis in Neosartorya fischeri. Identification of the biosynthetic gene cluster by genomic mining and functional proof of the genes by biochemical investigation.</title>
        <authorList>
            <person name="Yin W.B."/>
            <person name="Grundmann A."/>
            <person name="Cheng J."/>
            <person name="Li S.M."/>
        </authorList>
    </citation>
    <scope>FUNCTION</scope>
    <scope>PATHWAY</scope>
</reference>
<reference key="3">
    <citation type="journal article" date="2010" name="Biochemistry">
        <title>Anthranilate-activating modules from fungal nonribosomal peptide assembly lines.</title>
        <authorList>
            <person name="Ames B.D."/>
            <person name="Walsh C.T."/>
        </authorList>
    </citation>
    <scope>FUNCTION</scope>
    <scope>CATALYTIC ACTIVITY</scope>
    <scope>DOMAIN</scope>
</reference>
<evidence type="ECO:0000255" key="1"/>
<evidence type="ECO:0000255" key="2">
    <source>
        <dbReference type="PROSITE-ProRule" id="PRU00258"/>
    </source>
</evidence>
<evidence type="ECO:0000269" key="3">
    <source>
    </source>
</evidence>
<evidence type="ECO:0000269" key="4">
    <source>
    </source>
</evidence>
<evidence type="ECO:0000303" key="5">
    <source>
    </source>
</evidence>
<evidence type="ECO:0000305" key="6"/>
<sequence>MTITTMTPQNGTRRQVDGGPICFFPTMTRLDMQSITFDNHVVQKLTSFPNASDAGVHLLLAGLWALTLRQYAEVDTARFEVSTSILASGKGSGATKHVFSIALSPSDPVSTLFDVRNWDIRFVDQKHSDSFNTGVFVVENQNGRCLLDVEYHDINLLLQSNRTSAELSLVYRSSAIAGTYARHLADGIAQAIISISENPNQSIGAVDFCCSLQKAQVVTWQNAKIIQPDRSFLFEYISRNATVHGDTLAIDSWDGQFTYAELDGLSTVMATRFQERGIGPGDLVPMCFGKTRWAIAAMLAINKTGAGFVPLDPAYPQSRLETIIQKTQARVALASPTTESILRPLGLPLLVISDSILGCCLPHSKRYTAPNSGVAPAYCFFTSGSTGDPKGCEVSHLAFASIATHARSLCLSQQSRSLQFASFCFGASLLEIWCTLIVGGTLCIPSDHDRLNSLGEFMAKMRINWAFITPTVLASISPDNFNNLHLFIAGEPIGERDIRTWAPRARLFQAYGLTEWAGVFAVSRQIRTPEDRKSIGSPVNARAWIVDPLDHQKLAPIGAVGELVIEGPSLAQGYRGDPQRTAAVFLQRPPWLTLPALSKDGSSSRVYKTGDLVRYAEDGSLVYVRRKDNQVKIHGQRLEIGEVEYHVRQLFPQAKMVIVMVHEPSDAASHQRNLVALTLHPPNNGHTGFSHGKLEFMEVDQEYQSKVEHVRNGLRSRLPAFMIPQLFLPLSQIPTTITGKADRRSLCRDVNKLSYAQLHGLTTQMVSTRAAQGKGEEAIHAAVCDVLGLAPEHLGMNDNFFHLGGNSASAMKLTMSARRRGLRFTIRDVFNHPVLAELASAANLSNGCERPVVQTMELLEPESVSELKQLAVSQCRIDEDIIEDIYPSTALQEGLVAITARDPSLCKARVICKLRSNVRIDALKAAWECVVQLNDILRTRFILSASHGTFQVVCKEPFSWARAQNLEDCIQQSDALVHRVGDDLVHAYIIPDEKDRDSASTFVFVAHHALCDQWSIRLLLDQLTAAYGHSKLPSNRFSAFIRYLTKTRSHFKNYWINQFQGLEAVAFPPLPSPSYTPVASEKFDFVMKLLGNTTKQITTATYIKLAWAVVISCNTGSNDTVFGVTVNGRGAPIDGVGELTGPTIATIPQRIKLLPDQSATSALAEIQSHSLEVIPYEQAGLQNIQKYSPEARSACMFQSQLIIQPCPPSPPDLFEACDFSATQTGGFSAYGLSLECQMTYDDRHCEVTATFDPGMISRERVQRLLQHLELVLQDVMADPSRKVGDLPRMSRQDWDQIQRWSGTLPPVSRQCVHDAVDERYLEYPNACAVSAPDGDLSYAELIHSANAVAAELLAHGVEPGKYIPVLFEKCKWSPVAMLGVLKAGAAFVLLDPSYPPQRLHAICGGLKSQIILCSKGLSARAASLGPTAIAVHENATFLVDIPNATLPVVSPEDPAYVVFTSGSTGTPKGAIIDHQSYCSSALAHNRAHFLGRNSRVLQYASYAFDVSIMETLSTLMAGGCVCILSDLERHDHFADSVQRLAVTHAFLTPSTARLLMQRELPSLCVLVMGGEVMSLADRSYWMKRVRLMNEYGIAECSVASTIREVSDVEQRDIGFPMGVLAWVVDQNDHEKLVAIGAIGELLLEGPSVGRGYLDNPEATRRAFIEQPGWLRAVRGGKTSRVYKTGDLVQYNEDGSLSFIGRKDSQIKIRGQRFELEEVEQHLRRIDEIKEVTAVAVAPSDRQKQAYLVAFIVPRTRESFCVHSAKALVTHPTEEFRHLAAAIQSKLHSILPAHMVPSIYLPVNQMPKTSSDKVDRCRLKEEVGKWSWSDLQAYSVSSTSRRAPSNSVEQDLQRVWAQILGIRLDSIGVEDSFFHLGGDSIIAMQVVAEARSRGLDHSVQDINQLKSIKAIANKIGVVSTIAQPVVQDQVTDELFGLTPIQEFFFEKYPEGTCRFNQNILVHFQKPVADIDVERAANKLVQNHAILRARYARQKDGSWKQFFTGYTEQCFRFSMHKVNSVQEMRHIIGQSQTSLDPEHGPVFTVDLFDHNGQQSLFMIGHHLVLDLVSWRIILADMEAMILDPQHQPHLTMSFQTWARLQAEYGTRHLEPPPVQQLCSIDEPSMRKFWGAENNANTGGDSKTRLIRVNEQLTNKLFGPSSQALDVEPVELLHAAILFSFVNTFPQRPAPCIFGEAHGRETWDSSIDVTRTIGWFTTLWPVVAQVNPSDSLETVVRTVRQARRAMDMHGWKHFTSIYHNTQQTKCSAGTHLMEITFNYAGKFQQVEQDGALFRMEPMAKQNLFDGAAELGRWAMLEINSVILNGMLEFHVTYNRGTDEASVLTPWMDNLVKCLEDLASGFA</sequence>
<keyword id="KW-0017">Alkaloid metabolism</keyword>
<keyword id="KW-0436">Ligase</keyword>
<keyword id="KW-0596">Phosphopantetheine</keyword>
<keyword id="KW-0597">Phosphoprotein</keyword>
<keyword id="KW-1185">Reference proteome</keyword>
<keyword id="KW-0677">Repeat</keyword>
<feature type="chain" id="PRO_0000438416" description="Nonribosomal peptide synthetase anaPS">
    <location>
        <begin position="1"/>
        <end position="2359"/>
    </location>
</feature>
<feature type="domain" description="Carrier 1" evidence="2">
    <location>
        <begin position="770"/>
        <end position="846"/>
    </location>
</feature>
<feature type="domain" description="Carrier 2" evidence="2">
    <location>
        <begin position="1842"/>
        <end position="1918"/>
    </location>
</feature>
<feature type="region of interest" description="Adenylation 1" evidence="1">
    <location>
        <begin position="239"/>
        <end position="633"/>
    </location>
</feature>
<feature type="region of interest" description="Condensation 1" evidence="1">
    <location>
        <begin position="883"/>
        <end position="1292"/>
    </location>
</feature>
<feature type="region of interest" description="Adenylation 2" evidence="1">
    <location>
        <begin position="1321"/>
        <end position="1709"/>
    </location>
</feature>
<feature type="region of interest" description="Condensation 2" evidence="1">
    <location>
        <begin position="1936"/>
        <end position="2356"/>
    </location>
</feature>
<feature type="modified residue" description="O-(pantetheine 4'-phosphoryl)serine" evidence="2">
    <location>
        <position position="807"/>
    </location>
</feature>
<feature type="modified residue" description="O-(pantetheine 4'-phosphoryl)serine" evidence="2">
    <location>
        <position position="1879"/>
    </location>
</feature>
<proteinExistence type="evidence at protein level"/>
<comment type="function">
    <text evidence="3 4">Nonribosomal peptide synthetase; part of the gene cluster that mediates the biosynthesis of the prenylated pyrroloindoline diketopiperazine acetylaszonalenin (PubMed:19001367). The first step in the pathway is the formation of (R)-benzodiazepinedione by condensation of tryptophan and anthranilic acid catalyzed by the non-ribosomal peptide synthetase anaPS (PubMed:19001367, PubMed:20225828). The prenyltransferase anaPT then converts (R)-benzodiazepinedione to aszonalenin in the presence of dimethylallyl diphosphate (DMAPP) via C3-prenylation (PubMed:19001367). The last step in the biosynthesis of acetylaszonalenin via acetylation of aszonalenin at position N1 catalyzed by anaAT (PubMed:19001367).</text>
</comment>
<comment type="catalytic activity">
    <reaction evidence="4">
        <text>anthranilate + L-tryptophan + 2 ATP = (R)-benzodiazepinedione + 2 AMP + 2 diphosphate + H(+)</text>
        <dbReference type="Rhea" id="RHEA:73003"/>
        <dbReference type="ChEBI" id="CHEBI:15378"/>
        <dbReference type="ChEBI" id="CHEBI:16567"/>
        <dbReference type="ChEBI" id="CHEBI:30616"/>
        <dbReference type="ChEBI" id="CHEBI:33019"/>
        <dbReference type="ChEBI" id="CHEBI:57912"/>
        <dbReference type="ChEBI" id="CHEBI:188914"/>
        <dbReference type="ChEBI" id="CHEBI:456215"/>
    </reaction>
    <physiologicalReaction direction="left-to-right" evidence="4">
        <dbReference type="Rhea" id="RHEA:73004"/>
    </physiologicalReaction>
</comment>
<comment type="pathway">
    <text evidence="3">Alkaloid biosynthesis.</text>
</comment>
<comment type="domain">
    <text evidence="3 4">NRP synthetases are composed of discrete domains (adenylation (A), thiolation (T) or peptidyl carrier protein (PCP) and condensation (C) domains) which when grouped together are referred to as a single module. Each module is responsible for the recognition (via the A domain) and incorporation of a single amino acid into the growing peptide product. Thus, an NRP synthetase is generally composed of one or more modules and can terminate in a thioesterase domain (TE) that releases the newly synthesized peptide from the enzyme. Occasionally, epimerase (E) domains (responsible for l- to d- amino acid conversion) are present within the NRP synthetase. NRPS12 has the following architecture: A-T-C-A-T-C (PubMed:19001367, PubMed:20225828). The activation and loading of antranilate is performed by the first module (PubMed:20225828).</text>
</comment>
<comment type="similarity">
    <text evidence="6">Belongs to the NRP synthetase family.</text>
</comment>
<name>ANAPS_NEOFI</name>
<gene>
    <name evidence="5" type="primary">anaPS</name>
    <name type="ORF">NFIA_055290</name>
</gene>